<feature type="chain" id="PRO_1000144633" description="Photosystem II reaction center Psb28 protein">
    <location>
        <begin position="1"/>
        <end position="117"/>
    </location>
</feature>
<reference key="1">
    <citation type="journal article" date="2007" name="PLoS Genet.">
        <title>Patterns and implications of gene gain and loss in the evolution of Prochlorococcus.</title>
        <authorList>
            <person name="Kettler G.C."/>
            <person name="Martiny A.C."/>
            <person name="Huang K."/>
            <person name="Zucker J."/>
            <person name="Coleman M.L."/>
            <person name="Rodrigue S."/>
            <person name="Chen F."/>
            <person name="Lapidus A."/>
            <person name="Ferriera S."/>
            <person name="Johnson J."/>
            <person name="Steglich C."/>
            <person name="Church G.M."/>
            <person name="Richardson P."/>
            <person name="Chisholm S.W."/>
        </authorList>
    </citation>
    <scope>NUCLEOTIDE SEQUENCE [LARGE SCALE GENOMIC DNA]</scope>
    <source>
        <strain>MIT 9211</strain>
    </source>
</reference>
<dbReference type="EMBL" id="CP000878">
    <property type="protein sequence ID" value="ABX08651.1"/>
    <property type="molecule type" value="Genomic_DNA"/>
</dbReference>
<dbReference type="RefSeq" id="WP_012195273.1">
    <property type="nucleotide sequence ID" value="NC_009976.1"/>
</dbReference>
<dbReference type="SMR" id="A9B9Y9"/>
<dbReference type="STRING" id="93059.P9211_07201"/>
<dbReference type="KEGG" id="pmj:P9211_07201"/>
<dbReference type="eggNOG" id="COG3310">
    <property type="taxonomic scope" value="Bacteria"/>
</dbReference>
<dbReference type="HOGENOM" id="CLU_137323_1_0_3"/>
<dbReference type="OrthoDB" id="559598at2"/>
<dbReference type="Proteomes" id="UP000000788">
    <property type="component" value="Chromosome"/>
</dbReference>
<dbReference type="GO" id="GO:0009654">
    <property type="term" value="C:photosystem II oxygen evolving complex"/>
    <property type="evidence" value="ECO:0007669"/>
    <property type="project" value="InterPro"/>
</dbReference>
<dbReference type="GO" id="GO:0031676">
    <property type="term" value="C:plasma membrane-derived thylakoid membrane"/>
    <property type="evidence" value="ECO:0007669"/>
    <property type="project" value="UniProtKB-SubCell"/>
</dbReference>
<dbReference type="GO" id="GO:0015979">
    <property type="term" value="P:photosynthesis"/>
    <property type="evidence" value="ECO:0007669"/>
    <property type="project" value="UniProtKB-UniRule"/>
</dbReference>
<dbReference type="Gene3D" id="2.40.30.220">
    <property type="entry name" value="Photosystem II Psb28"/>
    <property type="match status" value="1"/>
</dbReference>
<dbReference type="HAMAP" id="MF_01370">
    <property type="entry name" value="PSII_Psb28"/>
    <property type="match status" value="1"/>
</dbReference>
<dbReference type="InterPro" id="IPR038676">
    <property type="entry name" value="Psb28_c1_sf"/>
</dbReference>
<dbReference type="InterPro" id="IPR005610">
    <property type="entry name" value="PSII_Psb28_class-1"/>
</dbReference>
<dbReference type="NCBIfam" id="TIGR03047">
    <property type="entry name" value="PS_II_psb28"/>
    <property type="match status" value="1"/>
</dbReference>
<dbReference type="PANTHER" id="PTHR34963">
    <property type="match status" value="1"/>
</dbReference>
<dbReference type="PANTHER" id="PTHR34963:SF2">
    <property type="entry name" value="PHOTOSYSTEM II REACTION CENTER PSB28 PROTEIN, CHLOROPLASTIC"/>
    <property type="match status" value="1"/>
</dbReference>
<dbReference type="Pfam" id="PF03912">
    <property type="entry name" value="Psb28"/>
    <property type="match status" value="1"/>
</dbReference>
<sequence length="117" mass="13070">MSSSKINPAIQFYEGVDETAIPEIRLTRSKDGKTGQAIFVFQKPDALSEATTGDITGMTLIDDEGALKTREVKARFLNGEPSAIEATYTWKTESDFERFMRFAERYAKKNGLGYSSK</sequence>
<gene>
    <name evidence="1" type="primary">psb28</name>
    <name type="ordered locus">P9211_07201</name>
</gene>
<evidence type="ECO:0000255" key="1">
    <source>
        <dbReference type="HAMAP-Rule" id="MF_01370"/>
    </source>
</evidence>
<accession>A9B9Y9</accession>
<proteinExistence type="inferred from homology"/>
<keyword id="KW-0472">Membrane</keyword>
<keyword id="KW-0602">Photosynthesis</keyword>
<keyword id="KW-0604">Photosystem II</keyword>
<keyword id="KW-1185">Reference proteome</keyword>
<keyword id="KW-0793">Thylakoid</keyword>
<organism>
    <name type="scientific">Prochlorococcus marinus (strain MIT 9211)</name>
    <dbReference type="NCBI Taxonomy" id="93059"/>
    <lineage>
        <taxon>Bacteria</taxon>
        <taxon>Bacillati</taxon>
        <taxon>Cyanobacteriota</taxon>
        <taxon>Cyanophyceae</taxon>
        <taxon>Synechococcales</taxon>
        <taxon>Prochlorococcaceae</taxon>
        <taxon>Prochlorococcus</taxon>
    </lineage>
</organism>
<comment type="subunit">
    <text evidence="1">Part of the photosystem II complex.</text>
</comment>
<comment type="subcellular location">
    <subcellularLocation>
        <location evidence="1">Cellular thylakoid membrane</location>
        <topology evidence="1">Peripheral membrane protein</topology>
        <orientation evidence="1">Cytoplasmic side</orientation>
    </subcellularLocation>
</comment>
<comment type="similarity">
    <text evidence="1">Belongs to the Psb28 family.</text>
</comment>
<name>PSB28_PROM4</name>
<protein>
    <recommendedName>
        <fullName evidence="1">Photosystem II reaction center Psb28 protein</fullName>
    </recommendedName>
    <alternativeName>
        <fullName evidence="1">Photosystem II 13 kDa protein</fullName>
    </alternativeName>
    <alternativeName>
        <fullName evidence="1">Photosystem II reaction center W protein</fullName>
    </alternativeName>
</protein>